<protein>
    <recommendedName>
        <fullName evidence="1">4-hydroxy-3-methylbut-2-en-1-yl diphosphate synthase (flavodoxin)</fullName>
        <ecNumber evidence="1">1.17.7.3</ecNumber>
    </recommendedName>
    <alternativeName>
        <fullName evidence="1">1-hydroxy-2-methyl-2-(E)-butenyl 4-diphosphate synthase</fullName>
    </alternativeName>
</protein>
<organism>
    <name type="scientific">Yersinia pseudotuberculosis serotype O:3 (strain YPIII)</name>
    <dbReference type="NCBI Taxonomy" id="502800"/>
    <lineage>
        <taxon>Bacteria</taxon>
        <taxon>Pseudomonadati</taxon>
        <taxon>Pseudomonadota</taxon>
        <taxon>Gammaproteobacteria</taxon>
        <taxon>Enterobacterales</taxon>
        <taxon>Yersiniaceae</taxon>
        <taxon>Yersinia</taxon>
    </lineage>
</organism>
<feature type="chain" id="PRO_1000097199" description="4-hydroxy-3-methylbut-2-en-1-yl diphosphate synthase (flavodoxin)">
    <location>
        <begin position="1"/>
        <end position="375"/>
    </location>
</feature>
<feature type="binding site" evidence="1">
    <location>
        <position position="270"/>
    </location>
    <ligand>
        <name>[4Fe-4S] cluster</name>
        <dbReference type="ChEBI" id="CHEBI:49883"/>
    </ligand>
</feature>
<feature type="binding site" evidence="1">
    <location>
        <position position="273"/>
    </location>
    <ligand>
        <name>[4Fe-4S] cluster</name>
        <dbReference type="ChEBI" id="CHEBI:49883"/>
    </ligand>
</feature>
<feature type="binding site" evidence="1">
    <location>
        <position position="305"/>
    </location>
    <ligand>
        <name>[4Fe-4S] cluster</name>
        <dbReference type="ChEBI" id="CHEBI:49883"/>
    </ligand>
</feature>
<feature type="binding site" evidence="1">
    <location>
        <position position="312"/>
    </location>
    <ligand>
        <name>[4Fe-4S] cluster</name>
        <dbReference type="ChEBI" id="CHEBI:49883"/>
    </ligand>
</feature>
<proteinExistence type="inferred from homology"/>
<reference key="1">
    <citation type="submission" date="2008-02" db="EMBL/GenBank/DDBJ databases">
        <title>Complete sequence of Yersinia pseudotuberculosis YPIII.</title>
        <authorList>
            <consortium name="US DOE Joint Genome Institute"/>
            <person name="Copeland A."/>
            <person name="Lucas S."/>
            <person name="Lapidus A."/>
            <person name="Glavina del Rio T."/>
            <person name="Dalin E."/>
            <person name="Tice H."/>
            <person name="Bruce D."/>
            <person name="Goodwin L."/>
            <person name="Pitluck S."/>
            <person name="Munk A.C."/>
            <person name="Brettin T."/>
            <person name="Detter J.C."/>
            <person name="Han C."/>
            <person name="Tapia R."/>
            <person name="Schmutz J."/>
            <person name="Larimer F."/>
            <person name="Land M."/>
            <person name="Hauser L."/>
            <person name="Challacombe J.F."/>
            <person name="Green L."/>
            <person name="Lindler L.E."/>
            <person name="Nikolich M.P."/>
            <person name="Richardson P."/>
        </authorList>
    </citation>
    <scope>NUCLEOTIDE SEQUENCE [LARGE SCALE GENOMIC DNA]</scope>
    <source>
        <strain>YPIII</strain>
    </source>
</reference>
<comment type="function">
    <text evidence="1">Converts 2C-methyl-D-erythritol 2,4-cyclodiphosphate (ME-2,4cPP) into 1-hydroxy-2-methyl-2-(E)-butenyl 4-diphosphate.</text>
</comment>
<comment type="catalytic activity">
    <reaction evidence="1">
        <text>(2E)-4-hydroxy-3-methylbut-2-enyl diphosphate + oxidized [flavodoxin] + H2O + 2 H(+) = 2-C-methyl-D-erythritol 2,4-cyclic diphosphate + reduced [flavodoxin]</text>
        <dbReference type="Rhea" id="RHEA:43604"/>
        <dbReference type="Rhea" id="RHEA-COMP:10622"/>
        <dbReference type="Rhea" id="RHEA-COMP:10623"/>
        <dbReference type="ChEBI" id="CHEBI:15377"/>
        <dbReference type="ChEBI" id="CHEBI:15378"/>
        <dbReference type="ChEBI" id="CHEBI:57618"/>
        <dbReference type="ChEBI" id="CHEBI:58210"/>
        <dbReference type="ChEBI" id="CHEBI:58483"/>
        <dbReference type="ChEBI" id="CHEBI:128753"/>
        <dbReference type="EC" id="1.17.7.3"/>
    </reaction>
</comment>
<comment type="cofactor">
    <cofactor evidence="1">
        <name>[4Fe-4S] cluster</name>
        <dbReference type="ChEBI" id="CHEBI:49883"/>
    </cofactor>
    <text evidence="1">Binds 1 [4Fe-4S] cluster.</text>
</comment>
<comment type="pathway">
    <text evidence="1">Isoprenoid biosynthesis; isopentenyl diphosphate biosynthesis via DXP pathway; isopentenyl diphosphate from 1-deoxy-D-xylulose 5-phosphate: step 5/6.</text>
</comment>
<comment type="similarity">
    <text evidence="1">Belongs to the IspG family.</text>
</comment>
<keyword id="KW-0004">4Fe-4S</keyword>
<keyword id="KW-0408">Iron</keyword>
<keyword id="KW-0411">Iron-sulfur</keyword>
<keyword id="KW-0414">Isoprene biosynthesis</keyword>
<keyword id="KW-0479">Metal-binding</keyword>
<keyword id="KW-0560">Oxidoreductase</keyword>
<dbReference type="EC" id="1.17.7.3" evidence="1"/>
<dbReference type="EMBL" id="CP000950">
    <property type="protein sequence ID" value="ACA67591.1"/>
    <property type="molecule type" value="Genomic_DNA"/>
</dbReference>
<dbReference type="RefSeq" id="WP_002209817.1">
    <property type="nucleotide sequence ID" value="NZ_CP009792.1"/>
</dbReference>
<dbReference type="SMR" id="B1JS05"/>
<dbReference type="GeneID" id="57975837"/>
<dbReference type="KEGG" id="ypy:YPK_1293"/>
<dbReference type="PATRIC" id="fig|502800.11.peg.1928"/>
<dbReference type="UniPathway" id="UPA00056">
    <property type="reaction ID" value="UER00096"/>
</dbReference>
<dbReference type="GO" id="GO:0051539">
    <property type="term" value="F:4 iron, 4 sulfur cluster binding"/>
    <property type="evidence" value="ECO:0007669"/>
    <property type="project" value="UniProtKB-UniRule"/>
</dbReference>
<dbReference type="GO" id="GO:0046429">
    <property type="term" value="F:4-hydroxy-3-methylbut-2-en-1-yl diphosphate synthase activity (ferredoxin)"/>
    <property type="evidence" value="ECO:0007669"/>
    <property type="project" value="UniProtKB-UniRule"/>
</dbReference>
<dbReference type="GO" id="GO:0141197">
    <property type="term" value="F:4-hydroxy-3-methylbut-2-enyl-diphosphate synthase activity (flavodoxin)"/>
    <property type="evidence" value="ECO:0007669"/>
    <property type="project" value="UniProtKB-EC"/>
</dbReference>
<dbReference type="GO" id="GO:0005506">
    <property type="term" value="F:iron ion binding"/>
    <property type="evidence" value="ECO:0007669"/>
    <property type="project" value="InterPro"/>
</dbReference>
<dbReference type="GO" id="GO:0019288">
    <property type="term" value="P:isopentenyl diphosphate biosynthetic process, methylerythritol 4-phosphate pathway"/>
    <property type="evidence" value="ECO:0007669"/>
    <property type="project" value="UniProtKB-UniRule"/>
</dbReference>
<dbReference type="GO" id="GO:0016114">
    <property type="term" value="P:terpenoid biosynthetic process"/>
    <property type="evidence" value="ECO:0007669"/>
    <property type="project" value="InterPro"/>
</dbReference>
<dbReference type="FunFam" id="3.20.20.20:FF:000001">
    <property type="entry name" value="4-hydroxy-3-methylbut-2-en-1-yl diphosphate synthase (flavodoxin)"/>
    <property type="match status" value="1"/>
</dbReference>
<dbReference type="FunFam" id="3.30.413.10:FF:000002">
    <property type="entry name" value="4-hydroxy-3-methylbut-2-en-1-yl diphosphate synthase (flavodoxin)"/>
    <property type="match status" value="1"/>
</dbReference>
<dbReference type="Gene3D" id="3.20.20.20">
    <property type="entry name" value="Dihydropteroate synthase-like"/>
    <property type="match status" value="1"/>
</dbReference>
<dbReference type="Gene3D" id="3.30.413.10">
    <property type="entry name" value="Sulfite Reductase Hemoprotein, domain 1"/>
    <property type="match status" value="1"/>
</dbReference>
<dbReference type="HAMAP" id="MF_00159">
    <property type="entry name" value="IspG"/>
    <property type="match status" value="1"/>
</dbReference>
<dbReference type="InterPro" id="IPR011005">
    <property type="entry name" value="Dihydropteroate_synth-like_sf"/>
</dbReference>
<dbReference type="InterPro" id="IPR036849">
    <property type="entry name" value="Enolase-like_C_sf"/>
</dbReference>
<dbReference type="InterPro" id="IPR016425">
    <property type="entry name" value="IspG_bac"/>
</dbReference>
<dbReference type="InterPro" id="IPR004588">
    <property type="entry name" value="IspG_bac-typ"/>
</dbReference>
<dbReference type="InterPro" id="IPR045854">
    <property type="entry name" value="NO2/SO3_Rdtase_4Fe4S_sf"/>
</dbReference>
<dbReference type="NCBIfam" id="TIGR00612">
    <property type="entry name" value="ispG_gcpE"/>
    <property type="match status" value="1"/>
</dbReference>
<dbReference type="NCBIfam" id="NF001540">
    <property type="entry name" value="PRK00366.1"/>
    <property type="match status" value="1"/>
</dbReference>
<dbReference type="PANTHER" id="PTHR30454">
    <property type="entry name" value="4-HYDROXY-3-METHYLBUT-2-EN-1-YL DIPHOSPHATE SYNTHASE"/>
    <property type="match status" value="1"/>
</dbReference>
<dbReference type="PANTHER" id="PTHR30454:SF0">
    <property type="entry name" value="4-HYDROXY-3-METHYLBUT-2-EN-1-YL DIPHOSPHATE SYNTHASE (FERREDOXIN), CHLOROPLASTIC"/>
    <property type="match status" value="1"/>
</dbReference>
<dbReference type="Pfam" id="PF04551">
    <property type="entry name" value="GcpE"/>
    <property type="match status" value="1"/>
</dbReference>
<dbReference type="PIRSF" id="PIRSF004640">
    <property type="entry name" value="IspG"/>
    <property type="match status" value="1"/>
</dbReference>
<dbReference type="SUPFAM" id="SSF51604">
    <property type="entry name" value="Enolase C-terminal domain-like"/>
    <property type="match status" value="1"/>
</dbReference>
<dbReference type="SUPFAM" id="SSF56014">
    <property type="entry name" value="Nitrite and sulphite reductase 4Fe-4S domain-like"/>
    <property type="match status" value="1"/>
</dbReference>
<sequence>MHNGSPIIRRKSTRIYVGKVPIGDGAPIAVQSMTNTKTTDVDATVAQIKALERVGVDIVRVSIPTMDAAEAFKLIKQQSTVPLVADIHFDYRIALKVAEYGVDCLRINPGNIGNESRIREVVACARDYNIPIRIGINGGSLEKDIQEKYGEPTPEALLESAMRHVDILDRLNFDQFKVSVKASDVFLAVNSYRLLAKQINNPLHLGITEAGGARSGSVKSAIGLGLLLSEGIGDTLRISLAADPVEEVKVGFDILKSLRIRARGINFIACPTCSRQEFDVIGTVNALEQRLEDLITPMDVSIIGCVVNGPGEALVSTIGVTGARNHSGFYEDGVRQKERFDNKAMIDQLEAKIRAKASILDANNRIVINQLDDNK</sequence>
<gene>
    <name evidence="1" type="primary">ispG</name>
    <name type="ordered locus">YPK_1293</name>
</gene>
<name>ISPG_YERPY</name>
<accession>B1JS05</accession>
<evidence type="ECO:0000255" key="1">
    <source>
        <dbReference type="HAMAP-Rule" id="MF_00159"/>
    </source>
</evidence>